<comment type="function">
    <text evidence="1">May bind and stabilize microtubules during myotubes formation.</text>
</comment>
<comment type="subunit">
    <text evidence="1">Homooligomer and heterooligomer. Interacts with TRIM63 and probably with TRIM55. Interacts with tubulin (By similarity).</text>
</comment>
<comment type="subcellular location">
    <subcellularLocation>
        <location evidence="1">Cytoplasm</location>
        <location evidence="1">Cytoskeleton</location>
    </subcellularLocation>
    <subcellularLocation>
        <location evidence="1">Cytoplasm</location>
        <location evidence="1">Myofibril</location>
        <location evidence="1">Sarcomere</location>
        <location evidence="1">Z line</location>
    </subcellularLocation>
    <text evidence="1">Associates with microtubules. Localizes to the Z-lines in skeletal muscles (By similarity).</text>
</comment>
<name>TRI54_BOVIN</name>
<reference key="1">
    <citation type="journal article" date="2005" name="BMC Genomics">
        <title>Characterization of 954 bovine full-CDS cDNA sequences.</title>
        <authorList>
            <person name="Harhay G.P."/>
            <person name="Sonstegard T.S."/>
            <person name="Keele J.W."/>
            <person name="Heaton M.P."/>
            <person name="Clawson M.L."/>
            <person name="Snelling W.M."/>
            <person name="Wiedmann R.T."/>
            <person name="Van Tassell C.P."/>
            <person name="Smith T.P.L."/>
        </authorList>
    </citation>
    <scope>NUCLEOTIDE SEQUENCE [LARGE SCALE MRNA]</scope>
</reference>
<reference key="2">
    <citation type="submission" date="2006-02" db="EMBL/GenBank/DDBJ databases">
        <authorList>
            <consortium name="NIH - Mammalian Gene Collection (MGC) project"/>
        </authorList>
    </citation>
    <scope>NUCLEOTIDE SEQUENCE [LARGE SCALE MRNA]</scope>
    <source>
        <strain>Hereford</strain>
        <tissue>Heart ventricle</tissue>
    </source>
</reference>
<accession>Q58D15</accession>
<accession>Q29RH5</accession>
<sequence length="366" mass="41337">MNFTVGFKPLLGDAHSMDNLEKQLICPICLEMFSKPVVILPCQHNLCRKCANDVFQASNPLWQSRSSTTVSSGGRFRCPSCRHEVVLDRHGVYGLQRNLLVENIIDIYKQESSRPLHSKAEQHLMCEEHEDEKINIYCLSCEVPTCSLCKVFGAHKDCEVAPLPTIYKRQKSELSDGIAMLVAGNDRVQAVITQMEEVCQTIEENSRRQKQLLNQRFEGLCAVLEERKGELLQALAREQEEKLQRVRGLIRQYGDHLEASSKLVESAIQSMEEPQMALYLQQAKELINKVGTMSKVELAGRPEPGYERMDQFTVSVEHVAEMLRTIDFQPGTSGEEEDEEVAVEGEEGNAGPEEERTDGRESTGQH</sequence>
<feature type="chain" id="PRO_0000056281" description="Tripartite motif-containing protein 54">
    <location>
        <begin position="1"/>
        <end position="366"/>
    </location>
</feature>
<feature type="domain" description="COS" evidence="5">
    <location>
        <begin position="271"/>
        <end position="329"/>
    </location>
</feature>
<feature type="zinc finger region" description="RING-type" evidence="4">
    <location>
        <begin position="26"/>
        <end position="82"/>
    </location>
</feature>
<feature type="zinc finger region" description="B box-type" evidence="3">
    <location>
        <begin position="121"/>
        <end position="163"/>
    </location>
</feature>
<feature type="region of interest" description="Mediates microtubule-binding and homooligomerization" evidence="1">
    <location>
        <begin position="168"/>
        <end position="211"/>
    </location>
</feature>
<feature type="region of interest" description="Disordered" evidence="6">
    <location>
        <begin position="326"/>
        <end position="366"/>
    </location>
</feature>
<feature type="coiled-coil region" evidence="2">
    <location>
        <begin position="185"/>
        <end position="258"/>
    </location>
</feature>
<feature type="compositionally biased region" description="Acidic residues" evidence="6">
    <location>
        <begin position="334"/>
        <end position="347"/>
    </location>
</feature>
<feature type="compositionally biased region" description="Basic and acidic residues" evidence="6">
    <location>
        <begin position="353"/>
        <end position="366"/>
    </location>
</feature>
<feature type="binding site" evidence="3">
    <location>
        <position position="126"/>
    </location>
    <ligand>
        <name>Zn(2+)</name>
        <dbReference type="ChEBI" id="CHEBI:29105"/>
    </ligand>
</feature>
<feature type="binding site" evidence="3">
    <location>
        <position position="129"/>
    </location>
    <ligand>
        <name>Zn(2+)</name>
        <dbReference type="ChEBI" id="CHEBI:29105"/>
    </ligand>
</feature>
<feature type="binding site" evidence="3">
    <location>
        <position position="149"/>
    </location>
    <ligand>
        <name>Zn(2+)</name>
        <dbReference type="ChEBI" id="CHEBI:29105"/>
    </ligand>
</feature>
<feature type="binding site" evidence="3">
    <location>
        <position position="155"/>
    </location>
    <ligand>
        <name>Zn(2+)</name>
        <dbReference type="ChEBI" id="CHEBI:29105"/>
    </ligand>
</feature>
<keyword id="KW-0175">Coiled coil</keyword>
<keyword id="KW-0963">Cytoplasm</keyword>
<keyword id="KW-0206">Cytoskeleton</keyword>
<keyword id="KW-0217">Developmental protein</keyword>
<keyword id="KW-0221">Differentiation</keyword>
<keyword id="KW-0479">Metal-binding</keyword>
<keyword id="KW-0493">Microtubule</keyword>
<keyword id="KW-1185">Reference proteome</keyword>
<keyword id="KW-0862">Zinc</keyword>
<keyword id="KW-0863">Zinc-finger</keyword>
<proteinExistence type="evidence at transcript level"/>
<organism>
    <name type="scientific">Bos taurus</name>
    <name type="common">Bovine</name>
    <dbReference type="NCBI Taxonomy" id="9913"/>
    <lineage>
        <taxon>Eukaryota</taxon>
        <taxon>Metazoa</taxon>
        <taxon>Chordata</taxon>
        <taxon>Craniata</taxon>
        <taxon>Vertebrata</taxon>
        <taxon>Euteleostomi</taxon>
        <taxon>Mammalia</taxon>
        <taxon>Eutheria</taxon>
        <taxon>Laurasiatheria</taxon>
        <taxon>Artiodactyla</taxon>
        <taxon>Ruminantia</taxon>
        <taxon>Pecora</taxon>
        <taxon>Bovidae</taxon>
        <taxon>Bovinae</taxon>
        <taxon>Bos</taxon>
    </lineage>
</organism>
<gene>
    <name type="primary">TRIM54</name>
</gene>
<protein>
    <recommendedName>
        <fullName>Tripartite motif-containing protein 54</fullName>
    </recommendedName>
</protein>
<dbReference type="EMBL" id="BT021782">
    <property type="protein sequence ID" value="AAX46629.1"/>
    <property type="molecule type" value="mRNA"/>
</dbReference>
<dbReference type="EMBL" id="BC114171">
    <property type="protein sequence ID" value="AAI14172.1"/>
    <property type="molecule type" value="mRNA"/>
</dbReference>
<dbReference type="RefSeq" id="NP_001017951.1">
    <property type="nucleotide sequence ID" value="NM_001017951.1"/>
</dbReference>
<dbReference type="SMR" id="Q58D15"/>
<dbReference type="FunCoup" id="Q58D15">
    <property type="interactions" value="102"/>
</dbReference>
<dbReference type="STRING" id="9913.ENSBTAP00000024312"/>
<dbReference type="PaxDb" id="9913-ENSBTAP00000024312"/>
<dbReference type="Ensembl" id="ENSBTAT00000024312.6">
    <property type="protein sequence ID" value="ENSBTAP00000024312.4"/>
    <property type="gene ID" value="ENSBTAG00000018267.6"/>
</dbReference>
<dbReference type="GeneID" id="535320"/>
<dbReference type="KEGG" id="bta:535320"/>
<dbReference type="CTD" id="57159"/>
<dbReference type="VEuPathDB" id="HostDB:ENSBTAG00000018267"/>
<dbReference type="VGNC" id="VGNC:36340">
    <property type="gene designation" value="TRIM54"/>
</dbReference>
<dbReference type="eggNOG" id="KOG2177">
    <property type="taxonomic scope" value="Eukaryota"/>
</dbReference>
<dbReference type="GeneTree" id="ENSGT00940000156529"/>
<dbReference type="HOGENOM" id="CLU_013137_5_1_1"/>
<dbReference type="InParanoid" id="Q58D15"/>
<dbReference type="OMA" id="MEDICRT"/>
<dbReference type="OrthoDB" id="5351233at2759"/>
<dbReference type="TreeFam" id="TF331669"/>
<dbReference type="Proteomes" id="UP000009136">
    <property type="component" value="Chromosome 11"/>
</dbReference>
<dbReference type="Bgee" id="ENSBTAG00000018267">
    <property type="expression patterns" value="Expressed in laryngeal cartilage and 45 other cell types or tissues"/>
</dbReference>
<dbReference type="GO" id="GO:0005737">
    <property type="term" value="C:cytoplasm"/>
    <property type="evidence" value="ECO:0000318"/>
    <property type="project" value="GO_Central"/>
</dbReference>
<dbReference type="GO" id="GO:0005874">
    <property type="term" value="C:microtubule"/>
    <property type="evidence" value="ECO:0007669"/>
    <property type="project" value="UniProtKB-KW"/>
</dbReference>
<dbReference type="GO" id="GO:0030018">
    <property type="term" value="C:Z disc"/>
    <property type="evidence" value="ECO:0007669"/>
    <property type="project" value="UniProtKB-SubCell"/>
</dbReference>
<dbReference type="GO" id="GO:0061630">
    <property type="term" value="F:ubiquitin protein ligase activity"/>
    <property type="evidence" value="ECO:0000318"/>
    <property type="project" value="GO_Central"/>
</dbReference>
<dbReference type="GO" id="GO:0008270">
    <property type="term" value="F:zinc ion binding"/>
    <property type="evidence" value="ECO:0007669"/>
    <property type="project" value="UniProtKB-KW"/>
</dbReference>
<dbReference type="GO" id="GO:0030154">
    <property type="term" value="P:cell differentiation"/>
    <property type="evidence" value="ECO:0007669"/>
    <property type="project" value="UniProtKB-KW"/>
</dbReference>
<dbReference type="GO" id="GO:0045087">
    <property type="term" value="P:innate immune response"/>
    <property type="evidence" value="ECO:0000318"/>
    <property type="project" value="GO_Central"/>
</dbReference>
<dbReference type="CDD" id="cd19833">
    <property type="entry name" value="Bbox2_MuRF3_C-II"/>
    <property type="match status" value="1"/>
</dbReference>
<dbReference type="CDD" id="cd16761">
    <property type="entry name" value="RING-HC_MuRF3"/>
    <property type="match status" value="1"/>
</dbReference>
<dbReference type="FunFam" id="3.30.40.10:FF:000014">
    <property type="entry name" value="probable E3 ubiquitin-protein ligase MID2"/>
    <property type="match status" value="1"/>
</dbReference>
<dbReference type="FunFam" id="1.20.5.170:FF:000022">
    <property type="entry name" value="Tripartite motif containing 55"/>
    <property type="match status" value="1"/>
</dbReference>
<dbReference type="FunFam" id="3.30.160.60:FF:000140">
    <property type="entry name" value="Tripartite motif containing 55"/>
    <property type="match status" value="1"/>
</dbReference>
<dbReference type="Gene3D" id="1.20.5.170">
    <property type="match status" value="1"/>
</dbReference>
<dbReference type="Gene3D" id="3.30.160.60">
    <property type="entry name" value="Classic Zinc Finger"/>
    <property type="match status" value="1"/>
</dbReference>
<dbReference type="Gene3D" id="3.30.40.10">
    <property type="entry name" value="Zinc/RING finger domain, C3HC4 (zinc finger)"/>
    <property type="match status" value="1"/>
</dbReference>
<dbReference type="InterPro" id="IPR017903">
    <property type="entry name" value="COS_domain"/>
</dbReference>
<dbReference type="InterPro" id="IPR050143">
    <property type="entry name" value="TRIM/RBCC"/>
</dbReference>
<dbReference type="InterPro" id="IPR033492">
    <property type="entry name" value="Trim54_Bbox2_Zfn"/>
</dbReference>
<dbReference type="InterPro" id="IPR042752">
    <property type="entry name" value="TRIM54_RING-HC"/>
</dbReference>
<dbReference type="InterPro" id="IPR027370">
    <property type="entry name" value="Znf-RING_euk"/>
</dbReference>
<dbReference type="InterPro" id="IPR000315">
    <property type="entry name" value="Znf_B-box"/>
</dbReference>
<dbReference type="InterPro" id="IPR001841">
    <property type="entry name" value="Znf_RING"/>
</dbReference>
<dbReference type="InterPro" id="IPR013083">
    <property type="entry name" value="Znf_RING/FYVE/PHD"/>
</dbReference>
<dbReference type="InterPro" id="IPR017907">
    <property type="entry name" value="Znf_RING_CS"/>
</dbReference>
<dbReference type="PANTHER" id="PTHR24103">
    <property type="entry name" value="E3 UBIQUITIN-PROTEIN LIGASE TRIM"/>
    <property type="match status" value="1"/>
</dbReference>
<dbReference type="Pfam" id="PF00643">
    <property type="entry name" value="zf-B_box"/>
    <property type="match status" value="1"/>
</dbReference>
<dbReference type="Pfam" id="PF13445">
    <property type="entry name" value="zf-RING_UBOX"/>
    <property type="match status" value="1"/>
</dbReference>
<dbReference type="SMART" id="SM00336">
    <property type="entry name" value="BBOX"/>
    <property type="match status" value="1"/>
</dbReference>
<dbReference type="SMART" id="SM00184">
    <property type="entry name" value="RING"/>
    <property type="match status" value="1"/>
</dbReference>
<dbReference type="SUPFAM" id="SSF57845">
    <property type="entry name" value="B-box zinc-binding domain"/>
    <property type="match status" value="1"/>
</dbReference>
<dbReference type="SUPFAM" id="SSF57850">
    <property type="entry name" value="RING/U-box"/>
    <property type="match status" value="1"/>
</dbReference>
<dbReference type="PROSITE" id="PS51262">
    <property type="entry name" value="COS"/>
    <property type="match status" value="1"/>
</dbReference>
<dbReference type="PROSITE" id="PS50119">
    <property type="entry name" value="ZF_BBOX"/>
    <property type="match status" value="1"/>
</dbReference>
<dbReference type="PROSITE" id="PS00518">
    <property type="entry name" value="ZF_RING_1"/>
    <property type="match status" value="1"/>
</dbReference>
<dbReference type="PROSITE" id="PS50089">
    <property type="entry name" value="ZF_RING_2"/>
    <property type="match status" value="1"/>
</dbReference>
<evidence type="ECO:0000250" key="1"/>
<evidence type="ECO:0000255" key="2"/>
<evidence type="ECO:0000255" key="3">
    <source>
        <dbReference type="PROSITE-ProRule" id="PRU00024"/>
    </source>
</evidence>
<evidence type="ECO:0000255" key="4">
    <source>
        <dbReference type="PROSITE-ProRule" id="PRU00175"/>
    </source>
</evidence>
<evidence type="ECO:0000255" key="5">
    <source>
        <dbReference type="PROSITE-ProRule" id="PRU00586"/>
    </source>
</evidence>
<evidence type="ECO:0000256" key="6">
    <source>
        <dbReference type="SAM" id="MobiDB-lite"/>
    </source>
</evidence>